<reference evidence="5" key="1">
    <citation type="journal article" date="2022" name="J. Insect Physiol.">
        <title>Proteotranscriptomics reveals the secretory dynamics of teratocytes, regulators of parasitization by an endoparasitoid wasp.</title>
        <authorList>
            <person name="Pinto C.P.G."/>
            <person name="Walker A.A."/>
            <person name="Robinson S.D."/>
            <person name="King G.F."/>
            <person name="Rossi G.D."/>
        </authorList>
    </citation>
    <scope>NUCLEOTIDE SEQUENCE [MRNA]</scope>
</reference>
<reference key="2">
    <citation type="journal article" date="2022" name="Insect Sci.">
        <title>Immunosuppressive, antimicrobial and insecticidal activities of inhibitor cystine knot peptides produced by teratocytes of the endoparasitoid wasp Cotesia flavipes (Hymenoptera: Braconidae).</title>
        <authorList>
            <person name="Pinto C.P.G."/>
            <person name="Walker A.A."/>
            <person name="King G.F."/>
            <person name="Rossi G.D."/>
        </authorList>
    </citation>
    <scope>FUNCTION</scope>
    <scope>SYNTHESIS OF 20-52</scope>
</reference>
<name>TP1_COTFL</name>
<feature type="signal peptide" evidence="1">
    <location>
        <begin position="1"/>
        <end position="19"/>
    </location>
</feature>
<feature type="chain" id="PRO_5035463911" description="Teratocyte protein CftICK-I" evidence="4">
    <location>
        <begin position="20"/>
        <end position="52"/>
    </location>
</feature>
<feature type="disulfide bond" evidence="4">
    <location>
        <begin position="22"/>
        <end position="37"/>
    </location>
</feature>
<feature type="disulfide bond" evidence="4">
    <location>
        <begin position="29"/>
        <end position="41"/>
    </location>
</feature>
<feature type="disulfide bond" evidence="4">
    <location>
        <begin position="36"/>
        <end position="51"/>
    </location>
</feature>
<accession>A0A8K1YTT9</accession>
<organism>
    <name type="scientific">Cotesia flavipes</name>
    <name type="common">Parasitic wasp</name>
    <name type="synonym">Apanteles flavipes</name>
    <dbReference type="NCBI Taxonomy" id="89805"/>
    <lineage>
        <taxon>Eukaryota</taxon>
        <taxon>Metazoa</taxon>
        <taxon>Ecdysozoa</taxon>
        <taxon>Arthropoda</taxon>
        <taxon>Hexapoda</taxon>
        <taxon>Insecta</taxon>
        <taxon>Pterygota</taxon>
        <taxon>Neoptera</taxon>
        <taxon>Endopterygota</taxon>
        <taxon>Hymenoptera</taxon>
        <taxon>Apocrita</taxon>
        <taxon>Ichneumonoidea</taxon>
        <taxon>Braconidae</taxon>
        <taxon>Microgastrinae</taxon>
        <taxon>Cotesia</taxon>
    </lineage>
</organism>
<evidence type="ECO:0000255" key="1"/>
<evidence type="ECO:0000269" key="2">
    <source>
    </source>
</evidence>
<evidence type="ECO:0000303" key="3">
    <source>
    </source>
</evidence>
<evidence type="ECO:0000305" key="4">
    <source>
    </source>
</evidence>
<evidence type="ECO:0000312" key="5">
    <source>
        <dbReference type="EMBL" id="UEP64313.1"/>
    </source>
</evidence>
<dbReference type="EMBL" id="MZ746720">
    <property type="protein sequence ID" value="UEP64313.1"/>
    <property type="molecule type" value="mRNA"/>
</dbReference>
<dbReference type="GO" id="GO:0005576">
    <property type="term" value="C:extracellular region"/>
    <property type="evidence" value="ECO:0007669"/>
    <property type="project" value="UniProtKB-SubCell"/>
</dbReference>
<dbReference type="GO" id="GO:0050832">
    <property type="term" value="P:defense response to fungus"/>
    <property type="evidence" value="ECO:0007669"/>
    <property type="project" value="UniProtKB-KW"/>
</dbReference>
<dbReference type="GO" id="GO:0031640">
    <property type="term" value="P:killing of cells of another organism"/>
    <property type="evidence" value="ECO:0007669"/>
    <property type="project" value="UniProtKB-KW"/>
</dbReference>
<comment type="function">
    <text evidence="2">This endoparasitoid wasp peptide has immununosuppressive, antimicrobial and insecticidal activities. Suppress cellular immunity which is detectable as a reduction of hemocyte encapsulation in the host. Shows potent antifungal activity against C.albicans (MIC~0.25 ug/ml). In vivo, ingestion of this peptide (probably at excessive doses) increases larval mortality and reduces leaf consumption of D.saccharalis, a permissive host for C.flavipes.</text>
</comment>
<comment type="subcellular location">
    <subcellularLocation>
        <location evidence="4">Secreted</location>
    </subcellularLocation>
</comment>
<comment type="tissue specificity">
    <text evidence="4">Abundantly expressed by teratocytes, which are extra-embryonic cells released by parasitoid wasps into their hosts during larval eclosion.</text>
</comment>
<comment type="domain">
    <text evidence="4">The presence of a 'disulfide through disulfide knot' structurally defines this protein as a knottin.</text>
</comment>
<comment type="miscellaneous">
    <text evidence="2">Negative results: does not influence host total hemocyte count. Does not influence hemocyte spread index in the host. Has no effect on humoral immune system, since it does not influence the activities of prophenoloxidase and phenoloxidase in the hemolymph of larval Diatraea saccharalis. Non-toxic to human cells, Gram-positive or -negative bacteria. In vivo, ingestion of this peptide does not impact larval mortality of the lepidopteran species S.frugiperda, a non- permissive host for C.flavipes.</text>
</comment>
<proteinExistence type="inferred from homology"/>
<keyword id="KW-0929">Antimicrobial</keyword>
<keyword id="KW-1015">Disulfide bond</keyword>
<keyword id="KW-0295">Fungicide</keyword>
<keyword id="KW-0964">Secreted</keyword>
<keyword id="KW-0732">Signal</keyword>
<protein>
    <recommendedName>
        <fullName evidence="3">Teratocyte protein CftICK-I</fullName>
    </recommendedName>
</protein>
<sequence>MYKLCILFLVVIFAVMAIAKECIPSNQQCSTISPPCCSGNCVLQGKHFSICA</sequence>